<gene>
    <name type="primary">ybeY</name>
    <name type="ordered locus">MG388</name>
</gene>
<feature type="chain" id="PRO_0000210588" description="Endoribonuclease YbeY">
    <location>
        <begin position="1"/>
        <end position="154"/>
    </location>
</feature>
<feature type="binding site" evidence="1">
    <location>
        <position position="117"/>
    </location>
    <ligand>
        <name>Zn(2+)</name>
        <dbReference type="ChEBI" id="CHEBI:29105"/>
        <note>catalytic</note>
    </ligand>
</feature>
<feature type="binding site" evidence="1">
    <location>
        <position position="121"/>
    </location>
    <ligand>
        <name>Zn(2+)</name>
        <dbReference type="ChEBI" id="CHEBI:29105"/>
        <note>catalytic</note>
    </ligand>
</feature>
<feature type="binding site" evidence="1">
    <location>
        <position position="127"/>
    </location>
    <ligand>
        <name>Zn(2+)</name>
        <dbReference type="ChEBI" id="CHEBI:29105"/>
        <note>catalytic</note>
    </ligand>
</feature>
<dbReference type="EC" id="3.1.-.-"/>
<dbReference type="EMBL" id="L43967">
    <property type="protein sequence ID" value="AAC71615.2"/>
    <property type="molecule type" value="Genomic_DNA"/>
</dbReference>
<dbReference type="EMBL" id="U02265">
    <property type="protein sequence ID" value="AAD12531.1"/>
    <property type="molecule type" value="Genomic_DNA"/>
</dbReference>
<dbReference type="PIR" id="I64242">
    <property type="entry name" value="I64242"/>
</dbReference>
<dbReference type="RefSeq" id="WP_009885634.1">
    <property type="nucleotide sequence ID" value="NC_000908.2"/>
</dbReference>
<dbReference type="SMR" id="P47628"/>
<dbReference type="STRING" id="243273.MG_388"/>
<dbReference type="GeneID" id="88282573"/>
<dbReference type="KEGG" id="mge:MG_388"/>
<dbReference type="eggNOG" id="COG0319">
    <property type="taxonomic scope" value="Bacteria"/>
</dbReference>
<dbReference type="HOGENOM" id="CLU_150621_0_0_14"/>
<dbReference type="InParanoid" id="P47628"/>
<dbReference type="OrthoDB" id="9807740at2"/>
<dbReference type="BioCyc" id="MGEN243273:G1GJ2-484-MONOMER"/>
<dbReference type="Proteomes" id="UP000000807">
    <property type="component" value="Chromosome"/>
</dbReference>
<dbReference type="GO" id="GO:0005737">
    <property type="term" value="C:cytoplasm"/>
    <property type="evidence" value="ECO:0007669"/>
    <property type="project" value="UniProtKB-SubCell"/>
</dbReference>
<dbReference type="GO" id="GO:0004222">
    <property type="term" value="F:metalloendopeptidase activity"/>
    <property type="evidence" value="ECO:0007669"/>
    <property type="project" value="InterPro"/>
</dbReference>
<dbReference type="GO" id="GO:0004521">
    <property type="term" value="F:RNA endonuclease activity"/>
    <property type="evidence" value="ECO:0007669"/>
    <property type="project" value="UniProtKB-UniRule"/>
</dbReference>
<dbReference type="GO" id="GO:0008270">
    <property type="term" value="F:zinc ion binding"/>
    <property type="evidence" value="ECO:0007669"/>
    <property type="project" value="UniProtKB-UniRule"/>
</dbReference>
<dbReference type="GO" id="GO:0006364">
    <property type="term" value="P:rRNA processing"/>
    <property type="evidence" value="ECO:0007669"/>
    <property type="project" value="UniProtKB-UniRule"/>
</dbReference>
<dbReference type="Gene3D" id="3.40.390.30">
    <property type="entry name" value="Metalloproteases ('zincins'), catalytic domain"/>
    <property type="match status" value="1"/>
</dbReference>
<dbReference type="InterPro" id="IPR023091">
    <property type="entry name" value="MetalPrtase_cat_dom_sf_prd"/>
</dbReference>
<dbReference type="InterPro" id="IPR002036">
    <property type="entry name" value="YbeY"/>
</dbReference>
<dbReference type="NCBIfam" id="TIGR00043">
    <property type="entry name" value="rRNA maturation RNase YbeY"/>
    <property type="match status" value="1"/>
</dbReference>
<dbReference type="Pfam" id="PF02130">
    <property type="entry name" value="YbeY"/>
    <property type="match status" value="1"/>
</dbReference>
<dbReference type="SUPFAM" id="SSF55486">
    <property type="entry name" value="Metalloproteases ('zincins'), catalytic domain"/>
    <property type="match status" value="1"/>
</dbReference>
<proteinExistence type="inferred from homology"/>
<sequence length="154" mass="17940">MKSSFSINSSRLFKRFFGKNYQAGVELCFQIIKSSLNLSFDPEFALLIVSCSKMKKLNKQFLKRRGCTDVISLCYNETETGFSLAIGEIFLCPKYIFKKAKEIGCNNWFLLTRCLIHGILHLFEFNHEESEAFESVTMFFQDAIHEEILSVWKF</sequence>
<name>YBEY_MYCGE</name>
<comment type="function">
    <text evidence="1">Single strand-specific metallo-endoribonuclease involved in late-stage 70S ribosome quality control and in maturation of the 3' terminus of the 16S rRNA.</text>
</comment>
<comment type="cofactor">
    <cofactor evidence="1">
        <name>Zn(2+)</name>
        <dbReference type="ChEBI" id="CHEBI:29105"/>
    </cofactor>
    <text evidence="1">Binds 1 zinc ion.</text>
</comment>
<comment type="subcellular location">
    <subcellularLocation>
        <location evidence="1">Cytoplasm</location>
    </subcellularLocation>
</comment>
<comment type="disruption phenotype">
    <text evidence="2">Probably essential, it was not disrupted in a global transposon mutagenesis study.</text>
</comment>
<comment type="similarity">
    <text evidence="3">Belongs to the endoribonuclease YbeY family.</text>
</comment>
<reference key="1">
    <citation type="journal article" date="1995" name="Science">
        <title>The minimal gene complement of Mycoplasma genitalium.</title>
        <authorList>
            <person name="Fraser C.M."/>
            <person name="Gocayne J.D."/>
            <person name="White O."/>
            <person name="Adams M.D."/>
            <person name="Clayton R.A."/>
            <person name="Fleischmann R.D."/>
            <person name="Bult C.J."/>
            <person name="Kerlavage A.R."/>
            <person name="Sutton G.G."/>
            <person name="Kelley J.M."/>
            <person name="Fritchman J.L."/>
            <person name="Weidman J.F."/>
            <person name="Small K.V."/>
            <person name="Sandusky M."/>
            <person name="Fuhrmann J.L."/>
            <person name="Nguyen D.T."/>
            <person name="Utterback T.R."/>
            <person name="Saudek D.M."/>
            <person name="Phillips C.A."/>
            <person name="Merrick J.M."/>
            <person name="Tomb J.-F."/>
            <person name="Dougherty B.A."/>
            <person name="Bott K.F."/>
            <person name="Hu P.-C."/>
            <person name="Lucier T.S."/>
            <person name="Peterson S.N."/>
            <person name="Smith H.O."/>
            <person name="Hutchison C.A. III"/>
            <person name="Venter J.C."/>
        </authorList>
    </citation>
    <scope>NUCLEOTIDE SEQUENCE [LARGE SCALE GENOMIC DNA]</scope>
    <source>
        <strain>ATCC 33530 / DSM 19775 / NCTC 10195 / G37</strain>
    </source>
</reference>
<reference key="2">
    <citation type="journal article" date="1993" name="J. Bacteriol.">
        <title>A survey of the Mycoplasma genitalium genome by using random sequencing.</title>
        <authorList>
            <person name="Peterson S.N."/>
            <person name="Hu P.-C."/>
            <person name="Bott K.F."/>
            <person name="Hutchison C.A. III"/>
        </authorList>
    </citation>
    <scope>NUCLEOTIDE SEQUENCE [GENOMIC DNA] OF 36-148</scope>
    <source>
        <strain>ATCC 33530 / DSM 19775 / NCTC 10195 / G37</strain>
    </source>
</reference>
<reference key="3">
    <citation type="journal article" date="2006" name="Proc. Natl. Acad. Sci. U.S.A.">
        <title>Essential genes of a minimal bacterium.</title>
        <authorList>
            <person name="Glass J.I."/>
            <person name="Assad-Garcia N."/>
            <person name="Alperovich N."/>
            <person name="Yooseph S."/>
            <person name="Lewis M.R."/>
            <person name="Maruf M."/>
            <person name="Hutchison C.A. III"/>
            <person name="Smith H.O."/>
            <person name="Venter J.C."/>
        </authorList>
    </citation>
    <scope>SEQUENCE REVISION</scope>
    <scope>DISRUPTION PHENOTYPE</scope>
    <source>
        <strain>ATCC 33530 / DSM 19775 / NCTC 10195 / G37</strain>
    </source>
</reference>
<evidence type="ECO:0000250" key="1"/>
<evidence type="ECO:0000269" key="2">
    <source>
    </source>
</evidence>
<evidence type="ECO:0000305" key="3"/>
<protein>
    <recommendedName>
        <fullName>Endoribonuclease YbeY</fullName>
        <ecNumber>3.1.-.-</ecNumber>
    </recommendedName>
</protein>
<accession>P47628</accession>
<accession>Q49368</accession>
<keyword id="KW-0963">Cytoplasm</keyword>
<keyword id="KW-0255">Endonuclease</keyword>
<keyword id="KW-0378">Hydrolase</keyword>
<keyword id="KW-0479">Metal-binding</keyword>
<keyword id="KW-0540">Nuclease</keyword>
<keyword id="KW-1185">Reference proteome</keyword>
<keyword id="KW-0690">Ribosome biogenesis</keyword>
<keyword id="KW-0698">rRNA processing</keyword>
<keyword id="KW-0862">Zinc</keyword>
<organism>
    <name type="scientific">Mycoplasma genitalium (strain ATCC 33530 / DSM 19775 / NCTC 10195 / G37)</name>
    <name type="common">Mycoplasmoides genitalium</name>
    <dbReference type="NCBI Taxonomy" id="243273"/>
    <lineage>
        <taxon>Bacteria</taxon>
        <taxon>Bacillati</taxon>
        <taxon>Mycoplasmatota</taxon>
        <taxon>Mycoplasmoidales</taxon>
        <taxon>Mycoplasmoidaceae</taxon>
        <taxon>Mycoplasmoides</taxon>
    </lineage>
</organism>